<dbReference type="EMBL" id="AE013218">
    <property type="protein sequence ID" value="AAM68054.1"/>
    <property type="molecule type" value="Genomic_DNA"/>
</dbReference>
<dbReference type="RefSeq" id="WP_011054020.1">
    <property type="nucleotide sequence ID" value="NC_004061.1"/>
</dbReference>
<dbReference type="SMR" id="Q8K946"/>
<dbReference type="STRING" id="198804.BUsg_511"/>
<dbReference type="GeneID" id="93003986"/>
<dbReference type="KEGG" id="bas:BUsg_511"/>
<dbReference type="eggNOG" id="COG2168">
    <property type="taxonomic scope" value="Bacteria"/>
</dbReference>
<dbReference type="HOGENOM" id="CLU_166087_2_1_6"/>
<dbReference type="Proteomes" id="UP000000416">
    <property type="component" value="Chromosome"/>
</dbReference>
<dbReference type="GO" id="GO:1990228">
    <property type="term" value="C:sulfurtransferase complex"/>
    <property type="evidence" value="ECO:0007669"/>
    <property type="project" value="TreeGrafter"/>
</dbReference>
<dbReference type="GO" id="GO:0002143">
    <property type="term" value="P:tRNA wobble position uridine thiolation"/>
    <property type="evidence" value="ECO:0007669"/>
    <property type="project" value="InterPro"/>
</dbReference>
<dbReference type="Gene3D" id="3.40.1260.10">
    <property type="entry name" value="DsrEFH-like"/>
    <property type="match status" value="1"/>
</dbReference>
<dbReference type="HAMAP" id="MF_01564">
    <property type="entry name" value="Thiourid_synth_B"/>
    <property type="match status" value="1"/>
</dbReference>
<dbReference type="InterPro" id="IPR027396">
    <property type="entry name" value="DsrEFH-like"/>
</dbReference>
<dbReference type="InterPro" id="IPR023526">
    <property type="entry name" value="Sulphur_relay_TusB"/>
</dbReference>
<dbReference type="InterPro" id="IPR007215">
    <property type="entry name" value="Sulphur_relay_TusB/DsrH"/>
</dbReference>
<dbReference type="NCBIfam" id="NF010035">
    <property type="entry name" value="PRK13510.1"/>
    <property type="match status" value="1"/>
</dbReference>
<dbReference type="NCBIfam" id="TIGR03011">
    <property type="entry name" value="sulf_tusB_dsrH"/>
    <property type="match status" value="1"/>
</dbReference>
<dbReference type="PANTHER" id="PTHR37526">
    <property type="entry name" value="PROTEIN TUSB"/>
    <property type="match status" value="1"/>
</dbReference>
<dbReference type="PANTHER" id="PTHR37526:SF1">
    <property type="entry name" value="PROTEIN TUSB"/>
    <property type="match status" value="1"/>
</dbReference>
<dbReference type="Pfam" id="PF04077">
    <property type="entry name" value="DsrH"/>
    <property type="match status" value="1"/>
</dbReference>
<dbReference type="SUPFAM" id="SSF75169">
    <property type="entry name" value="DsrEFH-like"/>
    <property type="match status" value="1"/>
</dbReference>
<keyword id="KW-0963">Cytoplasm</keyword>
<keyword id="KW-0819">tRNA processing</keyword>
<proteinExistence type="inferred from homology"/>
<name>TUSB_BUCAP</name>
<organism>
    <name type="scientific">Buchnera aphidicola subsp. Schizaphis graminum (strain Sg)</name>
    <dbReference type="NCBI Taxonomy" id="198804"/>
    <lineage>
        <taxon>Bacteria</taxon>
        <taxon>Pseudomonadati</taxon>
        <taxon>Pseudomonadota</taxon>
        <taxon>Gammaproteobacteria</taxon>
        <taxon>Enterobacterales</taxon>
        <taxon>Erwiniaceae</taxon>
        <taxon>Buchnera</taxon>
    </lineage>
</organism>
<feature type="chain" id="PRO_0000216260" description="Protein TusB">
    <location>
        <begin position="1"/>
        <end position="95"/>
    </location>
</feature>
<reference key="1">
    <citation type="journal article" date="2002" name="Science">
        <title>50 million years of genomic stasis in endosymbiotic bacteria.</title>
        <authorList>
            <person name="Tamas I."/>
            <person name="Klasson L."/>
            <person name="Canbaeck B."/>
            <person name="Naeslund A.K."/>
            <person name="Eriksson A.-S."/>
            <person name="Wernegreen J.J."/>
            <person name="Sandstroem J.P."/>
            <person name="Moran N.A."/>
            <person name="Andersson S.G.E."/>
        </authorList>
    </citation>
    <scope>NUCLEOTIDE SEQUENCE [LARGE SCALE GENOMIC DNA]</scope>
    <source>
        <strain>Sg</strain>
    </source>
</reference>
<evidence type="ECO:0000255" key="1">
    <source>
        <dbReference type="HAMAP-Rule" id="MF_01564"/>
    </source>
</evidence>
<comment type="function">
    <text evidence="1">Part of a sulfur-relay system required for 2-thiolation of 5-methylaminomethyl-2-thiouridine (mnm(5)s(2)U) at tRNA wobble positions.</text>
</comment>
<comment type="subunit">
    <text evidence="1">Heterohexamer, formed by a dimer of trimers. The hexameric TusBCD complex contains 2 copies each of TusB, TusC and TusD. The TusBCD complex interacts with TusE.</text>
</comment>
<comment type="subcellular location">
    <subcellularLocation>
        <location evidence="1">Cytoplasm</location>
    </subcellularLocation>
</comment>
<comment type="similarity">
    <text evidence="1">Belongs to the DsrH/TusB family.</text>
</comment>
<protein>
    <recommendedName>
        <fullName evidence="1">Protein TusB</fullName>
    </recommendedName>
    <alternativeName>
        <fullName evidence="1">tRNA 2-thiouridine synthesizing protein B</fullName>
    </alternativeName>
</protein>
<sequence>MLHTLMKSPFETNISFFSGMLKKTDDFLALQDGVLIALIDNIFLKKITFSSENLYVIKEDVYARGIHKNISSSFILISYIDFVNLTLKNKKQIIW</sequence>
<accession>Q8K946</accession>
<gene>
    <name evidence="1" type="primary">tusB</name>
    <name type="ordered locus">BUsg_511</name>
</gene>